<proteinExistence type="evidence at protein level"/>
<sequence length="76" mass="8571">MAVSTELLVLGVYGALAGLYLLVVPAIVYAYLNARWYVASSFERAFMYFLVTFFFPGLLLLAPFINFRPQPRSLNS</sequence>
<dbReference type="EC" id="7.1.1.-"/>
<dbReference type="EMBL" id="BA000039">
    <property type="protein sequence ID" value="BAC08257.1"/>
    <property type="molecule type" value="Genomic_DNA"/>
</dbReference>
<dbReference type="RefSeq" id="NP_681495.1">
    <property type="nucleotide sequence ID" value="NC_004113.1"/>
</dbReference>
<dbReference type="RefSeq" id="WP_011056553.1">
    <property type="nucleotide sequence ID" value="NC_004113.1"/>
</dbReference>
<dbReference type="PDB" id="6HUM">
    <property type="method" value="EM"/>
    <property type="resolution" value="3.34 A"/>
    <property type="chains" value="L=1-76"/>
</dbReference>
<dbReference type="PDB" id="6KHI">
    <property type="method" value="EM"/>
    <property type="resolution" value="3.00 A"/>
    <property type="chains" value="L=1-76"/>
</dbReference>
<dbReference type="PDB" id="6KHJ">
    <property type="method" value="EM"/>
    <property type="resolution" value="3.00 A"/>
    <property type="chains" value="L=1-76"/>
</dbReference>
<dbReference type="PDB" id="6L7O">
    <property type="method" value="EM"/>
    <property type="resolution" value="3.20 A"/>
    <property type="chains" value="L=1-76"/>
</dbReference>
<dbReference type="PDB" id="6L7P">
    <property type="method" value="EM"/>
    <property type="resolution" value="3.60 A"/>
    <property type="chains" value="L=1-76"/>
</dbReference>
<dbReference type="PDB" id="6NBQ">
    <property type="method" value="EM"/>
    <property type="resolution" value="3.10 A"/>
    <property type="chains" value="L=1-76"/>
</dbReference>
<dbReference type="PDB" id="6NBX">
    <property type="method" value="EM"/>
    <property type="resolution" value="3.50 A"/>
    <property type="chains" value="L=1-76"/>
</dbReference>
<dbReference type="PDB" id="6NBY">
    <property type="method" value="EM"/>
    <property type="resolution" value="3.10 A"/>
    <property type="chains" value="L=1-76"/>
</dbReference>
<dbReference type="PDB" id="6TJV">
    <property type="method" value="EM"/>
    <property type="resolution" value="3.20 A"/>
    <property type="chains" value="L=1-76"/>
</dbReference>
<dbReference type="PDBsum" id="6HUM"/>
<dbReference type="PDBsum" id="6KHI"/>
<dbReference type="PDBsum" id="6KHJ"/>
<dbReference type="PDBsum" id="6L7O"/>
<dbReference type="PDBsum" id="6L7P"/>
<dbReference type="PDBsum" id="6NBQ"/>
<dbReference type="PDBsum" id="6NBX"/>
<dbReference type="PDBsum" id="6NBY"/>
<dbReference type="PDBsum" id="6TJV"/>
<dbReference type="EMDB" id="EMD-0281"/>
<dbReference type="EMDB" id="EMD-0415"/>
<dbReference type="EMDB" id="EMD-0425"/>
<dbReference type="EMDB" id="EMD-0849"/>
<dbReference type="EMDB" id="EMD-0850"/>
<dbReference type="EMDB" id="EMD-10513"/>
<dbReference type="EMDB" id="EMD-9989"/>
<dbReference type="EMDB" id="EMD-9990"/>
<dbReference type="SMR" id="Q8DKZ3"/>
<dbReference type="IntAct" id="Q8DKZ3">
    <property type="interactions" value="1"/>
</dbReference>
<dbReference type="STRING" id="197221.gene:10747296"/>
<dbReference type="TCDB" id="3.D.1.8.2">
    <property type="family name" value="the h+ or na+-translocating nadh dehydrogenase (ndh) family"/>
</dbReference>
<dbReference type="EnsemblBacteria" id="BAC08257">
    <property type="protein sequence ID" value="BAC08257"/>
    <property type="gene ID" value="BAC08257"/>
</dbReference>
<dbReference type="KEGG" id="tel:tsr0706"/>
<dbReference type="PATRIC" id="fig|197221.4.peg.746"/>
<dbReference type="eggNOG" id="ENOG5032ZM4">
    <property type="taxonomic scope" value="Bacteria"/>
</dbReference>
<dbReference type="BRENDA" id="7.1.1.10">
    <property type="organism ID" value="7763"/>
</dbReference>
<dbReference type="Proteomes" id="UP000000440">
    <property type="component" value="Chromosome"/>
</dbReference>
<dbReference type="GO" id="GO:0031676">
    <property type="term" value="C:plasma membrane-derived thylakoid membrane"/>
    <property type="evidence" value="ECO:0007669"/>
    <property type="project" value="UniProtKB-SubCell"/>
</dbReference>
<dbReference type="GO" id="GO:0016655">
    <property type="term" value="F:oxidoreductase activity, acting on NAD(P)H, quinone or similar compound as acceptor"/>
    <property type="evidence" value="ECO:0007669"/>
    <property type="project" value="UniProtKB-UniRule"/>
</dbReference>
<dbReference type="GO" id="GO:0048038">
    <property type="term" value="F:quinone binding"/>
    <property type="evidence" value="ECO:0007669"/>
    <property type="project" value="UniProtKB-KW"/>
</dbReference>
<dbReference type="HAMAP" id="MF_01355">
    <property type="entry name" value="NDH1_NDH1L"/>
    <property type="match status" value="1"/>
</dbReference>
<dbReference type="InterPro" id="IPR019654">
    <property type="entry name" value="NADH-quinone_OxRdatse_su_L"/>
</dbReference>
<dbReference type="PANTHER" id="PTHR36727">
    <property type="entry name" value="NAD(P)H-QUINONE OXIDOREDUCTASE SUBUNIT L, CHLOROPLASTIC"/>
    <property type="match status" value="1"/>
</dbReference>
<dbReference type="PANTHER" id="PTHR36727:SF2">
    <property type="entry name" value="NAD(P)H-QUINONE OXIDOREDUCTASE SUBUNIT L, CHLOROPLASTIC"/>
    <property type="match status" value="1"/>
</dbReference>
<dbReference type="Pfam" id="PF10716">
    <property type="entry name" value="NdhL"/>
    <property type="match status" value="1"/>
</dbReference>
<accession>Q8DKZ3</accession>
<organism>
    <name type="scientific">Thermosynechococcus vestitus (strain NIES-2133 / IAM M-273 / BP-1)</name>
    <dbReference type="NCBI Taxonomy" id="197221"/>
    <lineage>
        <taxon>Bacteria</taxon>
        <taxon>Bacillati</taxon>
        <taxon>Cyanobacteriota</taxon>
        <taxon>Cyanophyceae</taxon>
        <taxon>Acaryochloridales</taxon>
        <taxon>Thermosynechococcaceae</taxon>
        <taxon>Thermosynechococcus</taxon>
    </lineage>
</organism>
<protein>
    <recommendedName>
        <fullName>NAD(P)H-quinone oxidoreductase subunit L</fullName>
        <ecNumber>7.1.1.-</ecNumber>
    </recommendedName>
    <alternativeName>
        <fullName>NAD(P)H dehydrogenase I subunit L</fullName>
    </alternativeName>
    <alternativeName>
        <fullName>NDH-1 subunit L</fullName>
    </alternativeName>
    <alternativeName>
        <fullName>NDH-L</fullName>
    </alternativeName>
</protein>
<name>NDHL_THEVB</name>
<comment type="function">
    <text evidence="1">NDH-1 shuttles electrons from an unknown electron donor, via FMN and iron-sulfur (Fe-S) centers, to quinones in the respiratory and/or the photosynthetic chain. The immediate electron acceptor for the enzyme in this species is believed to be plastoquinone. Couples the redox reaction to proton translocation, and thus conserves the redox energy in a proton gradient. Cyanobacterial NDH-1 also plays a role in inorganic carbon-concentration (By similarity).</text>
</comment>
<comment type="catalytic activity">
    <reaction>
        <text>a plastoquinone + NADH + (n+1) H(+)(in) = a plastoquinol + NAD(+) + n H(+)(out)</text>
        <dbReference type="Rhea" id="RHEA:42608"/>
        <dbReference type="Rhea" id="RHEA-COMP:9561"/>
        <dbReference type="Rhea" id="RHEA-COMP:9562"/>
        <dbReference type="ChEBI" id="CHEBI:15378"/>
        <dbReference type="ChEBI" id="CHEBI:17757"/>
        <dbReference type="ChEBI" id="CHEBI:57540"/>
        <dbReference type="ChEBI" id="CHEBI:57945"/>
        <dbReference type="ChEBI" id="CHEBI:62192"/>
    </reaction>
</comment>
<comment type="catalytic activity">
    <reaction>
        <text>a plastoquinone + NADPH + (n+1) H(+)(in) = a plastoquinol + NADP(+) + n H(+)(out)</text>
        <dbReference type="Rhea" id="RHEA:42612"/>
        <dbReference type="Rhea" id="RHEA-COMP:9561"/>
        <dbReference type="Rhea" id="RHEA-COMP:9562"/>
        <dbReference type="ChEBI" id="CHEBI:15378"/>
        <dbReference type="ChEBI" id="CHEBI:17757"/>
        <dbReference type="ChEBI" id="CHEBI:57783"/>
        <dbReference type="ChEBI" id="CHEBI:58349"/>
        <dbReference type="ChEBI" id="CHEBI:62192"/>
    </reaction>
</comment>
<comment type="subunit">
    <text>NDH-1 can be composed of about 15 different subunits; different subcomplexes with different compositions have been identified which probably have different functions.</text>
</comment>
<comment type="subcellular location">
    <subcellularLocation>
        <location evidence="3">Cellular thylakoid membrane</location>
        <topology evidence="3">Multi-pass membrane protein</topology>
    </subcellularLocation>
</comment>
<comment type="similarity">
    <text evidence="3">Belongs to the complex I NdhL subunit family.</text>
</comment>
<gene>
    <name type="primary">ndhL</name>
    <name type="ordered locus">tsr0706</name>
</gene>
<reference key="1">
    <citation type="journal article" date="2002" name="DNA Res.">
        <title>Complete genome structure of the thermophilic cyanobacterium Thermosynechococcus elongatus BP-1.</title>
        <authorList>
            <person name="Nakamura Y."/>
            <person name="Kaneko T."/>
            <person name="Sato S."/>
            <person name="Ikeuchi M."/>
            <person name="Katoh H."/>
            <person name="Sasamoto S."/>
            <person name="Watanabe A."/>
            <person name="Iriguchi M."/>
            <person name="Kawashima K."/>
            <person name="Kimura T."/>
            <person name="Kishida Y."/>
            <person name="Kiyokawa C."/>
            <person name="Kohara M."/>
            <person name="Matsumoto M."/>
            <person name="Matsuno A."/>
            <person name="Nakazaki N."/>
            <person name="Shimpo S."/>
            <person name="Sugimoto M."/>
            <person name="Takeuchi C."/>
            <person name="Yamada M."/>
            <person name="Tabata S."/>
        </authorList>
    </citation>
    <scope>NUCLEOTIDE SEQUENCE [LARGE SCALE GENOMIC DNA]</scope>
    <source>
        <strain>NIES-2133 / IAM M-273 / BP-1</strain>
    </source>
</reference>
<reference key="2">
    <citation type="journal article" date="2005" name="Biochem. J.">
        <title>Isolation, subunit composition and interaction of the NDH-1 complexes from Thermosynechococcus elongatus BP-1.</title>
        <authorList>
            <person name="Zhang P."/>
            <person name="Battchikova N."/>
            <person name="Paakkarinen V."/>
            <person name="Katoh H."/>
            <person name="Iwai M."/>
            <person name="Ikeuchi M."/>
            <person name="Pakrasi H.B."/>
            <person name="Ogawa T."/>
            <person name="Aro E.-M."/>
        </authorList>
    </citation>
    <scope>PROTEIN SEQUENCE OF 36-44</scope>
    <scope>CHARACTERIZATION AS A MEMBER OF THE NAD(P)H-QUINONE OXIDOREDUCTASE COMPLEX</scope>
    <scope>SUBCOMPLEXES OF NDH-1</scope>
</reference>
<keyword id="KW-0002">3D-structure</keyword>
<keyword id="KW-0903">Direct protein sequencing</keyword>
<keyword id="KW-0472">Membrane</keyword>
<keyword id="KW-0520">NAD</keyword>
<keyword id="KW-0521">NADP</keyword>
<keyword id="KW-0618">Plastoquinone</keyword>
<keyword id="KW-0874">Quinone</keyword>
<keyword id="KW-1185">Reference proteome</keyword>
<keyword id="KW-0793">Thylakoid</keyword>
<keyword id="KW-1278">Translocase</keyword>
<keyword id="KW-0812">Transmembrane</keyword>
<keyword id="KW-1133">Transmembrane helix</keyword>
<keyword id="KW-0813">Transport</keyword>
<feature type="chain" id="PRO_0000353684" description="NAD(P)H-quinone oxidoreductase subunit L">
    <location>
        <begin position="1"/>
        <end position="76"/>
    </location>
</feature>
<feature type="transmembrane region" description="Helical" evidence="2">
    <location>
        <begin position="8"/>
        <end position="28"/>
    </location>
</feature>
<feature type="transmembrane region" description="Helical" evidence="2">
    <location>
        <begin position="45"/>
        <end position="65"/>
    </location>
</feature>
<feature type="helix" evidence="4">
    <location>
        <begin position="6"/>
        <end position="21"/>
    </location>
</feature>
<feature type="helix" evidence="4">
    <location>
        <begin position="23"/>
        <end position="34"/>
    </location>
</feature>
<feature type="strand" evidence="4">
    <location>
        <begin position="35"/>
        <end position="38"/>
    </location>
</feature>
<feature type="helix" evidence="4">
    <location>
        <begin position="41"/>
        <end position="53"/>
    </location>
</feature>
<feature type="helix" evidence="4">
    <location>
        <begin position="55"/>
        <end position="61"/>
    </location>
</feature>
<feature type="helix" evidence="4">
    <location>
        <begin position="62"/>
        <end position="64"/>
    </location>
</feature>
<evidence type="ECO:0000250" key="1"/>
<evidence type="ECO:0000255" key="2"/>
<evidence type="ECO:0000305" key="3"/>
<evidence type="ECO:0007829" key="4">
    <source>
        <dbReference type="PDB" id="6KHI"/>
    </source>
</evidence>